<keyword id="KW-0007">Acetylation</keyword>
<keyword id="KW-0143">Chaperone</keyword>
<keyword id="KW-0175">Coiled coil</keyword>
<keyword id="KW-0472">Membrane</keyword>
<keyword id="KW-0496">Mitochondrion</keyword>
<keyword id="KW-1000">Mitochondrion outer membrane</keyword>
<keyword id="KW-0597">Phosphoprotein</keyword>
<keyword id="KW-1185">Reference proteome</keyword>
<proteinExistence type="evidence at transcript level"/>
<comment type="function">
    <text evidence="1 2">Required for mitochondrial inner membrane organization. Seems to function through its association with the MICOS complex and the mitochondrial outer membrane sorting assembly machinery (SAM) complex.</text>
</comment>
<comment type="subunit">
    <text evidence="2">Associates with the mitochondrial contact site and cristae organizing system (MICOS) complex, composed of at least MICOS10/MIC10, CHCHD3/MIC19, CHCHD6/MIC25, APOOL/MIC27, IMMT/MIC60, APOO/MIC23/MIC26 and QIL1/MIC13. This complex was also known under the names MINOS or MitOS complex. The MICOS complex associates with mitochondrial outer membrane proteins SAMM50, MTX1 and MTX2 (together described as components of the mitochondrial outer membrane sorting assembly machinery (SAM) complex) and DNAJC11, mitochondrial inner membrane protein TMEM11 and with HSPA9. The MICOS and SAM complexes together with DNAJC11 are part of a large protein complex spanning both membranes termed the mitochondrial intermembrane space bridging (MIB) complex.</text>
</comment>
<comment type="subcellular location">
    <subcellularLocation>
        <location evidence="2">Mitochondrion</location>
    </subcellularLocation>
    <subcellularLocation>
        <location evidence="2">Mitochondrion outer membrane</location>
        <topology evidence="2">Peripheral membrane protein</topology>
    </subcellularLocation>
</comment>
<comment type="similarity">
    <text evidence="5">Belongs to the DNAJC11 family.</text>
</comment>
<name>DJC11_PONAB</name>
<feature type="initiator methionine" description="Removed" evidence="2">
    <location>
        <position position="1"/>
    </location>
</feature>
<feature type="chain" id="PRO_0000247159" description="DnaJ homolog subfamily C member 11">
    <location>
        <begin position="2"/>
        <end position="559"/>
    </location>
</feature>
<feature type="domain" description="J" evidence="4">
    <location>
        <begin position="14"/>
        <end position="82"/>
    </location>
</feature>
<feature type="coiled-coil region" evidence="3">
    <location>
        <begin position="417"/>
        <end position="457"/>
    </location>
</feature>
<feature type="modified residue" description="N-acetylalanine" evidence="2">
    <location>
        <position position="2"/>
    </location>
</feature>
<feature type="modified residue" description="Phosphoserine" evidence="1">
    <location>
        <position position="204"/>
    </location>
</feature>
<protein>
    <recommendedName>
        <fullName>DnaJ homolog subfamily C member 11</fullName>
    </recommendedName>
</protein>
<evidence type="ECO:0000250" key="1">
    <source>
        <dbReference type="UniProtKB" id="Q5U458"/>
    </source>
</evidence>
<evidence type="ECO:0000250" key="2">
    <source>
        <dbReference type="UniProtKB" id="Q9NVH1"/>
    </source>
</evidence>
<evidence type="ECO:0000255" key="3"/>
<evidence type="ECO:0000255" key="4">
    <source>
        <dbReference type="PROSITE-ProRule" id="PRU00286"/>
    </source>
</evidence>
<evidence type="ECO:0000305" key="5"/>
<sequence>MATALSEEELDNEDYYSLLNVRREASSEELKAAYRRLCMLYHPDKHRDPELKSQAERLFNLVHQAYEVLSDPQTRAIYDIYGKRGLEMEGWEVVERRRTPAEIREEFERLQREREERRLQQRTNPKGTISVGVDATDLFDRYDEEYEDVSGSSFPQIEINKMHISQSIEAPLTATDTAILSGSLSTQNGNGGGSINFALRRVTSAKGWGELEFGAGDLQGPLFGLKLFRNLTPRCFVTTNCALQFSSRGIRPGLTTVLARNLDKNTVGYLQWRWGIQSAMNTSIVRDTKTSHFTVALQLGIPHSFALISYQHKFQDDDQTRVKGSLKAGFFGTVVEYGAERKISRHSVLGAAVSIGVPQGVSLKVKLNRASQTYFFPIHLTDQLLPSAVFYATMGPLVVYFAMHRLIIKPYLRAQKEKELEKQRESAATDVLQKKQEAESAVRLMQESVRRIIEAEESRMGLIIVNAWYGKFVNDKSRKSEKVKVIDVTVPLQCLVKDSKLILTEASKAGLPGFYDPCVGEEKNLKVLYQFRGVLHQVMVLDSEALRIPKQSHRIDTDG</sequence>
<accession>Q5RC70</accession>
<gene>
    <name type="primary">DNAJC11</name>
</gene>
<organism>
    <name type="scientific">Pongo abelii</name>
    <name type="common">Sumatran orangutan</name>
    <name type="synonym">Pongo pygmaeus abelii</name>
    <dbReference type="NCBI Taxonomy" id="9601"/>
    <lineage>
        <taxon>Eukaryota</taxon>
        <taxon>Metazoa</taxon>
        <taxon>Chordata</taxon>
        <taxon>Craniata</taxon>
        <taxon>Vertebrata</taxon>
        <taxon>Euteleostomi</taxon>
        <taxon>Mammalia</taxon>
        <taxon>Eutheria</taxon>
        <taxon>Euarchontoglires</taxon>
        <taxon>Primates</taxon>
        <taxon>Haplorrhini</taxon>
        <taxon>Catarrhini</taxon>
        <taxon>Hominidae</taxon>
        <taxon>Pongo</taxon>
    </lineage>
</organism>
<dbReference type="EMBL" id="CR858410">
    <property type="protein sequence ID" value="CAH90637.1"/>
    <property type="molecule type" value="mRNA"/>
</dbReference>
<dbReference type="RefSeq" id="NP_001125345.1">
    <property type="nucleotide sequence ID" value="NM_001131873.1"/>
</dbReference>
<dbReference type="SMR" id="Q5RC70"/>
<dbReference type="FunCoup" id="Q5RC70">
    <property type="interactions" value="3570"/>
</dbReference>
<dbReference type="STRING" id="9601.ENSPPYP00000002243"/>
<dbReference type="Ensembl" id="ENSPPYT00000002310.2">
    <property type="protein sequence ID" value="ENSPPYP00000002243.1"/>
    <property type="gene ID" value="ENSPPYG00000001934.3"/>
</dbReference>
<dbReference type="GeneID" id="100172247"/>
<dbReference type="KEGG" id="pon:100172247"/>
<dbReference type="CTD" id="55735"/>
<dbReference type="eggNOG" id="KOG0718">
    <property type="taxonomic scope" value="Eukaryota"/>
</dbReference>
<dbReference type="GeneTree" id="ENSGT00860000133842"/>
<dbReference type="HOGENOM" id="CLU_019611_2_0_1"/>
<dbReference type="InParanoid" id="Q5RC70"/>
<dbReference type="OMA" id="QLDKHTM"/>
<dbReference type="OrthoDB" id="18010at2759"/>
<dbReference type="TreeFam" id="TF105170"/>
<dbReference type="Proteomes" id="UP000001595">
    <property type="component" value="Chromosome 1"/>
</dbReference>
<dbReference type="GO" id="GO:0061617">
    <property type="term" value="C:MICOS complex"/>
    <property type="evidence" value="ECO:0007669"/>
    <property type="project" value="Ensembl"/>
</dbReference>
<dbReference type="GO" id="GO:0016607">
    <property type="term" value="C:nuclear speck"/>
    <property type="evidence" value="ECO:0007669"/>
    <property type="project" value="Ensembl"/>
</dbReference>
<dbReference type="GO" id="GO:0001401">
    <property type="term" value="C:SAM complex"/>
    <property type="evidence" value="ECO:0007669"/>
    <property type="project" value="Ensembl"/>
</dbReference>
<dbReference type="GO" id="GO:0042407">
    <property type="term" value="P:cristae formation"/>
    <property type="evidence" value="ECO:0007669"/>
    <property type="project" value="Ensembl"/>
</dbReference>
<dbReference type="CDD" id="cd06257">
    <property type="entry name" value="DnaJ"/>
    <property type="match status" value="1"/>
</dbReference>
<dbReference type="FunFam" id="1.10.287.110:FF:000027">
    <property type="entry name" value="DnaJ (Hsp40) homolog, subfamily C, member 11"/>
    <property type="match status" value="1"/>
</dbReference>
<dbReference type="Gene3D" id="1.10.287.110">
    <property type="entry name" value="DnaJ domain"/>
    <property type="match status" value="1"/>
</dbReference>
<dbReference type="InterPro" id="IPR024586">
    <property type="entry name" value="DnaJ-like_C11_C"/>
</dbReference>
<dbReference type="InterPro" id="IPR001623">
    <property type="entry name" value="DnaJ_domain"/>
</dbReference>
<dbReference type="InterPro" id="IPR018253">
    <property type="entry name" value="DnaJ_domain_CS"/>
</dbReference>
<dbReference type="InterPro" id="IPR055225">
    <property type="entry name" value="DNAJC11-like_beta-barrel"/>
</dbReference>
<dbReference type="InterPro" id="IPR036869">
    <property type="entry name" value="J_dom_sf"/>
</dbReference>
<dbReference type="InterPro" id="IPR052243">
    <property type="entry name" value="Mito_inner_membrane_organizer"/>
</dbReference>
<dbReference type="PANTHER" id="PTHR44157">
    <property type="entry name" value="DNAJ HOMOLOG SUBFAMILY C MEMBER 11"/>
    <property type="match status" value="1"/>
</dbReference>
<dbReference type="PANTHER" id="PTHR44157:SF1">
    <property type="entry name" value="DNAJ HOMOLOG SUBFAMILY C MEMBER 11"/>
    <property type="match status" value="1"/>
</dbReference>
<dbReference type="Pfam" id="PF00226">
    <property type="entry name" value="DnaJ"/>
    <property type="match status" value="1"/>
</dbReference>
<dbReference type="Pfam" id="PF11875">
    <property type="entry name" value="DnaJ-like_C11_C"/>
    <property type="match status" value="1"/>
</dbReference>
<dbReference type="Pfam" id="PF22774">
    <property type="entry name" value="DNAJC11_beta-barrel"/>
    <property type="match status" value="1"/>
</dbReference>
<dbReference type="PRINTS" id="PR00625">
    <property type="entry name" value="JDOMAIN"/>
</dbReference>
<dbReference type="SMART" id="SM00271">
    <property type="entry name" value="DnaJ"/>
    <property type="match status" value="1"/>
</dbReference>
<dbReference type="SUPFAM" id="SSF46565">
    <property type="entry name" value="Chaperone J-domain"/>
    <property type="match status" value="1"/>
</dbReference>
<dbReference type="PROSITE" id="PS00636">
    <property type="entry name" value="DNAJ_1"/>
    <property type="match status" value="1"/>
</dbReference>
<dbReference type="PROSITE" id="PS50076">
    <property type="entry name" value="DNAJ_2"/>
    <property type="match status" value="1"/>
</dbReference>
<reference key="1">
    <citation type="submission" date="2004-11" db="EMBL/GenBank/DDBJ databases">
        <authorList>
            <consortium name="The German cDNA consortium"/>
        </authorList>
    </citation>
    <scope>NUCLEOTIDE SEQUENCE [LARGE SCALE MRNA]</scope>
    <source>
        <tissue>Brain cortex</tissue>
    </source>
</reference>